<organism>
    <name type="scientific">Escherichia coli O6:H1 (strain CFT073 / ATCC 700928 / UPEC)</name>
    <dbReference type="NCBI Taxonomy" id="199310"/>
    <lineage>
        <taxon>Bacteria</taxon>
        <taxon>Pseudomonadati</taxon>
        <taxon>Pseudomonadota</taxon>
        <taxon>Gammaproteobacteria</taxon>
        <taxon>Enterobacterales</taxon>
        <taxon>Enterobacteriaceae</taxon>
        <taxon>Escherichia</taxon>
    </lineage>
</organism>
<accession>P64531</accession>
<accession>P76424</accession>
<protein>
    <recommendedName>
        <fullName>Transcriptional repressor RcnR</fullName>
    </recommendedName>
</protein>
<keyword id="KW-0963">Cytoplasm</keyword>
<keyword id="KW-0238">DNA-binding</keyword>
<keyword id="KW-1185">Reference proteome</keyword>
<keyword id="KW-0678">Repressor</keyword>
<keyword id="KW-0804">Transcription</keyword>
<keyword id="KW-0805">Transcription regulation</keyword>
<proteinExistence type="inferred from homology"/>
<feature type="chain" id="PRO_0000169145" description="Transcriptional repressor RcnR">
    <location>
        <begin position="1"/>
        <end position="90"/>
    </location>
</feature>
<sequence>MSHTIRDKQKLKARASKIQGQVVALKKMLDEPHECAAVLQQIAAIRGAVNGLMREVIKGHLTEHIVHQGDELKREEDLDVVLKVLDSYIK</sequence>
<reference key="1">
    <citation type="journal article" date="2002" name="Proc. Natl. Acad. Sci. U.S.A.">
        <title>Extensive mosaic structure revealed by the complete genome sequence of uropathogenic Escherichia coli.</title>
        <authorList>
            <person name="Welch R.A."/>
            <person name="Burland V."/>
            <person name="Plunkett G. III"/>
            <person name="Redford P."/>
            <person name="Roesch P."/>
            <person name="Rasko D."/>
            <person name="Buckles E.L."/>
            <person name="Liou S.-R."/>
            <person name="Boutin A."/>
            <person name="Hackett J."/>
            <person name="Stroud D."/>
            <person name="Mayhew G.F."/>
            <person name="Rose D.J."/>
            <person name="Zhou S."/>
            <person name="Schwartz D.C."/>
            <person name="Perna N.T."/>
            <person name="Mobley H.L.T."/>
            <person name="Donnenberg M.S."/>
            <person name="Blattner F.R."/>
        </authorList>
    </citation>
    <scope>NUCLEOTIDE SEQUENCE [LARGE SCALE GENOMIC DNA]</scope>
    <source>
        <strain>CFT073 / ATCC 700928 / UPEC</strain>
    </source>
</reference>
<evidence type="ECO:0000250" key="1"/>
<evidence type="ECO:0000305" key="2"/>
<name>RCNR_ECOL6</name>
<comment type="function">
    <text evidence="1">Repressor of rcnA expression. Acts by binding specifically to the rcnA promoter in the absence of nickel and cobalt. In the presence of one of these metals, it has a weaker affinity for rcnA promoter (By similarity).</text>
</comment>
<comment type="subcellular location">
    <subcellularLocation>
        <location evidence="2">Cytoplasm</location>
    </subcellularLocation>
</comment>
<comment type="similarity">
    <text evidence="2">Belongs to the FrmR/RcnR family.</text>
</comment>
<dbReference type="EMBL" id="AE014075">
    <property type="protein sequence ID" value="AAN81088.1"/>
    <property type="molecule type" value="Genomic_DNA"/>
</dbReference>
<dbReference type="RefSeq" id="WP_000019944.1">
    <property type="nucleotide sequence ID" value="NZ_CP051263.1"/>
</dbReference>
<dbReference type="SMR" id="P64531"/>
<dbReference type="STRING" id="199310.c2632"/>
<dbReference type="GeneID" id="93775089"/>
<dbReference type="KEGG" id="ecc:c2632"/>
<dbReference type="eggNOG" id="COG1937">
    <property type="taxonomic scope" value="Bacteria"/>
</dbReference>
<dbReference type="HOGENOM" id="CLU_130332_3_0_6"/>
<dbReference type="BioCyc" id="ECOL199310:C2632-MONOMER"/>
<dbReference type="Proteomes" id="UP000001410">
    <property type="component" value="Chromosome"/>
</dbReference>
<dbReference type="GO" id="GO:0005737">
    <property type="term" value="C:cytoplasm"/>
    <property type="evidence" value="ECO:0007669"/>
    <property type="project" value="UniProtKB-SubCell"/>
</dbReference>
<dbReference type="GO" id="GO:0003677">
    <property type="term" value="F:DNA binding"/>
    <property type="evidence" value="ECO:0007669"/>
    <property type="project" value="UniProtKB-KW"/>
</dbReference>
<dbReference type="GO" id="GO:0046872">
    <property type="term" value="F:metal ion binding"/>
    <property type="evidence" value="ECO:0007669"/>
    <property type="project" value="InterPro"/>
</dbReference>
<dbReference type="GO" id="GO:0045892">
    <property type="term" value="P:negative regulation of DNA-templated transcription"/>
    <property type="evidence" value="ECO:0007669"/>
    <property type="project" value="UniProtKB-ARBA"/>
</dbReference>
<dbReference type="CDD" id="cd10153">
    <property type="entry name" value="RcnR-FrmR-like_DUF156"/>
    <property type="match status" value="1"/>
</dbReference>
<dbReference type="FunFam" id="1.20.58.1000:FF:000001">
    <property type="entry name" value="Transcriptional repressor RcnR"/>
    <property type="match status" value="1"/>
</dbReference>
<dbReference type="Gene3D" id="1.20.58.1000">
    <property type="entry name" value="Metal-sensitive repressor, helix protomer"/>
    <property type="match status" value="1"/>
</dbReference>
<dbReference type="InterPro" id="IPR003735">
    <property type="entry name" value="Metal_Tscrpt_repr"/>
</dbReference>
<dbReference type="InterPro" id="IPR038390">
    <property type="entry name" value="Metal_Tscrpt_repr_sf"/>
</dbReference>
<dbReference type="NCBIfam" id="NF011613">
    <property type="entry name" value="PRK15039.1"/>
    <property type="match status" value="1"/>
</dbReference>
<dbReference type="PANTHER" id="PTHR33677">
    <property type="entry name" value="TRANSCRIPTIONAL REPRESSOR FRMR-RELATED"/>
    <property type="match status" value="1"/>
</dbReference>
<dbReference type="PANTHER" id="PTHR33677:SF1">
    <property type="entry name" value="TRANSCRIPTIONAL REPRESSOR RCNR"/>
    <property type="match status" value="1"/>
</dbReference>
<dbReference type="Pfam" id="PF02583">
    <property type="entry name" value="Trns_repr_metal"/>
    <property type="match status" value="1"/>
</dbReference>
<gene>
    <name type="primary">rcnR</name>
    <name type="ordered locus">c2632</name>
</gene>